<proteinExistence type="inferred from homology"/>
<protein>
    <recommendedName>
        <fullName evidence="1">Large ribosomal subunit protein bL33</fullName>
    </recommendedName>
    <alternativeName>
        <fullName evidence="2">50S ribosomal protein L33</fullName>
    </alternativeName>
</protein>
<evidence type="ECO:0000255" key="1">
    <source>
        <dbReference type="HAMAP-Rule" id="MF_00294"/>
    </source>
</evidence>
<evidence type="ECO:0000305" key="2"/>
<gene>
    <name evidence="1" type="primary">rpmG</name>
    <name type="ordered locus">RPE_3383</name>
</gene>
<comment type="similarity">
    <text evidence="1">Belongs to the bacterial ribosomal protein bL33 family.</text>
</comment>
<dbReference type="EMBL" id="CP000463">
    <property type="protein sequence ID" value="ABJ07315.1"/>
    <property type="molecule type" value="Genomic_DNA"/>
</dbReference>
<dbReference type="SMR" id="Q07L69"/>
<dbReference type="STRING" id="316055.RPE_3383"/>
<dbReference type="KEGG" id="rpe:RPE_3383"/>
<dbReference type="eggNOG" id="COG0267">
    <property type="taxonomic scope" value="Bacteria"/>
</dbReference>
<dbReference type="HOGENOM" id="CLU_190949_1_1_5"/>
<dbReference type="OrthoDB" id="21586at2"/>
<dbReference type="GO" id="GO:0022625">
    <property type="term" value="C:cytosolic large ribosomal subunit"/>
    <property type="evidence" value="ECO:0007669"/>
    <property type="project" value="TreeGrafter"/>
</dbReference>
<dbReference type="GO" id="GO:0003735">
    <property type="term" value="F:structural constituent of ribosome"/>
    <property type="evidence" value="ECO:0007669"/>
    <property type="project" value="InterPro"/>
</dbReference>
<dbReference type="GO" id="GO:0006412">
    <property type="term" value="P:translation"/>
    <property type="evidence" value="ECO:0007669"/>
    <property type="project" value="UniProtKB-UniRule"/>
</dbReference>
<dbReference type="FunFam" id="2.20.28.120:FF:000003">
    <property type="entry name" value="50S ribosomal protein L33"/>
    <property type="match status" value="1"/>
</dbReference>
<dbReference type="Gene3D" id="2.20.28.120">
    <property type="entry name" value="Ribosomal protein L33"/>
    <property type="match status" value="1"/>
</dbReference>
<dbReference type="HAMAP" id="MF_00294">
    <property type="entry name" value="Ribosomal_bL33"/>
    <property type="match status" value="1"/>
</dbReference>
<dbReference type="InterPro" id="IPR001705">
    <property type="entry name" value="Ribosomal_bL33"/>
</dbReference>
<dbReference type="InterPro" id="IPR018264">
    <property type="entry name" value="Ribosomal_bL33_CS"/>
</dbReference>
<dbReference type="InterPro" id="IPR038584">
    <property type="entry name" value="Ribosomal_bL33_sf"/>
</dbReference>
<dbReference type="InterPro" id="IPR011332">
    <property type="entry name" value="Ribosomal_zn-bd"/>
</dbReference>
<dbReference type="NCBIfam" id="NF001860">
    <property type="entry name" value="PRK00595.1"/>
    <property type="match status" value="1"/>
</dbReference>
<dbReference type="NCBIfam" id="TIGR01023">
    <property type="entry name" value="rpmG_bact"/>
    <property type="match status" value="1"/>
</dbReference>
<dbReference type="PANTHER" id="PTHR15238">
    <property type="entry name" value="54S RIBOSOMAL PROTEIN L39, MITOCHONDRIAL"/>
    <property type="match status" value="1"/>
</dbReference>
<dbReference type="PANTHER" id="PTHR15238:SF1">
    <property type="entry name" value="LARGE RIBOSOMAL SUBUNIT PROTEIN BL33M"/>
    <property type="match status" value="1"/>
</dbReference>
<dbReference type="Pfam" id="PF00471">
    <property type="entry name" value="Ribosomal_L33"/>
    <property type="match status" value="1"/>
</dbReference>
<dbReference type="SUPFAM" id="SSF57829">
    <property type="entry name" value="Zn-binding ribosomal proteins"/>
    <property type="match status" value="1"/>
</dbReference>
<dbReference type="PROSITE" id="PS00582">
    <property type="entry name" value="RIBOSOMAL_L33"/>
    <property type="match status" value="1"/>
</dbReference>
<accession>Q07L69</accession>
<organism>
    <name type="scientific">Rhodopseudomonas palustris (strain BisA53)</name>
    <dbReference type="NCBI Taxonomy" id="316055"/>
    <lineage>
        <taxon>Bacteria</taxon>
        <taxon>Pseudomonadati</taxon>
        <taxon>Pseudomonadota</taxon>
        <taxon>Alphaproteobacteria</taxon>
        <taxon>Hyphomicrobiales</taxon>
        <taxon>Nitrobacteraceae</taxon>
        <taxon>Rhodopseudomonas</taxon>
    </lineage>
</organism>
<reference key="1">
    <citation type="submission" date="2006-09" db="EMBL/GenBank/DDBJ databases">
        <title>Complete sequence of Rhodopseudomonas palustris BisA53.</title>
        <authorList>
            <consortium name="US DOE Joint Genome Institute"/>
            <person name="Copeland A."/>
            <person name="Lucas S."/>
            <person name="Lapidus A."/>
            <person name="Barry K."/>
            <person name="Detter J.C."/>
            <person name="Glavina del Rio T."/>
            <person name="Hammon N."/>
            <person name="Israni S."/>
            <person name="Dalin E."/>
            <person name="Tice H."/>
            <person name="Pitluck S."/>
            <person name="Chain P."/>
            <person name="Malfatti S."/>
            <person name="Shin M."/>
            <person name="Vergez L."/>
            <person name="Schmutz J."/>
            <person name="Larimer F."/>
            <person name="Land M."/>
            <person name="Hauser L."/>
            <person name="Pelletier D.A."/>
            <person name="Kyrpides N."/>
            <person name="Kim E."/>
            <person name="Harwood C.S."/>
            <person name="Oda Y."/>
            <person name="Richardson P."/>
        </authorList>
    </citation>
    <scope>NUCLEOTIDE SEQUENCE [LARGE SCALE GENOMIC DNA]</scope>
    <source>
        <strain>BisA53</strain>
    </source>
</reference>
<keyword id="KW-0687">Ribonucleoprotein</keyword>
<keyword id="KW-0689">Ribosomal protein</keyword>
<sequence length="55" mass="6381">MAKAVTIKIKLVSTADTGFYYVSKKNSRTMTDKMVKRKYDPVARKHVEFKEAKIK</sequence>
<name>RL33_RHOP5</name>
<feature type="chain" id="PRO_0000356631" description="Large ribosomal subunit protein bL33">
    <location>
        <begin position="1"/>
        <end position="55"/>
    </location>
</feature>